<feature type="chain" id="PRO_0000167754" description="Pyridoxine/pyridoxamine 5'-phosphate oxidase">
    <location>
        <begin position="1"/>
        <end position="212"/>
    </location>
</feature>
<feature type="binding site" evidence="1">
    <location>
        <begin position="8"/>
        <end position="11"/>
    </location>
    <ligand>
        <name>substrate</name>
    </ligand>
</feature>
<feature type="binding site" evidence="1">
    <location>
        <begin position="61"/>
        <end position="66"/>
    </location>
    <ligand>
        <name>FMN</name>
        <dbReference type="ChEBI" id="CHEBI:58210"/>
    </ligand>
</feature>
<feature type="binding site" evidence="1">
    <location>
        <position position="66"/>
    </location>
    <ligand>
        <name>substrate</name>
    </ligand>
</feature>
<feature type="binding site" evidence="1">
    <location>
        <begin position="76"/>
        <end position="77"/>
    </location>
    <ligand>
        <name>FMN</name>
        <dbReference type="ChEBI" id="CHEBI:58210"/>
    </ligand>
</feature>
<feature type="binding site" evidence="1">
    <location>
        <position position="82"/>
    </location>
    <ligand>
        <name>FMN</name>
        <dbReference type="ChEBI" id="CHEBI:58210"/>
    </ligand>
</feature>
<feature type="binding site" evidence="1">
    <location>
        <position position="83"/>
    </location>
    <ligand>
        <name>FMN</name>
        <dbReference type="ChEBI" id="CHEBI:58210"/>
    </ligand>
</feature>
<feature type="binding site" evidence="1">
    <location>
        <position position="105"/>
    </location>
    <ligand>
        <name>FMN</name>
        <dbReference type="ChEBI" id="CHEBI:58210"/>
    </ligand>
</feature>
<feature type="binding site" evidence="1">
    <location>
        <position position="123"/>
    </location>
    <ligand>
        <name>substrate</name>
    </ligand>
</feature>
<feature type="binding site" evidence="1">
    <location>
        <position position="127"/>
    </location>
    <ligand>
        <name>substrate</name>
    </ligand>
</feature>
<feature type="binding site" evidence="1">
    <location>
        <position position="131"/>
    </location>
    <ligand>
        <name>substrate</name>
    </ligand>
</feature>
<feature type="binding site" evidence="1">
    <location>
        <begin position="140"/>
        <end position="141"/>
    </location>
    <ligand>
        <name>FMN</name>
        <dbReference type="ChEBI" id="CHEBI:58210"/>
    </ligand>
</feature>
<feature type="binding site" evidence="1">
    <location>
        <position position="185"/>
    </location>
    <ligand>
        <name>FMN</name>
        <dbReference type="ChEBI" id="CHEBI:58210"/>
    </ligand>
</feature>
<feature type="binding site" evidence="1">
    <location>
        <begin position="191"/>
        <end position="193"/>
    </location>
    <ligand>
        <name>substrate</name>
    </ligand>
</feature>
<feature type="binding site" evidence="1">
    <location>
        <position position="195"/>
    </location>
    <ligand>
        <name>FMN</name>
        <dbReference type="ChEBI" id="CHEBI:58210"/>
    </ligand>
</feature>
<name>PDXH_SHEON</name>
<organism>
    <name type="scientific">Shewanella oneidensis (strain ATCC 700550 / JCM 31522 / CIP 106686 / LMG 19005 / NCIMB 14063 / MR-1)</name>
    <dbReference type="NCBI Taxonomy" id="211586"/>
    <lineage>
        <taxon>Bacteria</taxon>
        <taxon>Pseudomonadati</taxon>
        <taxon>Pseudomonadota</taxon>
        <taxon>Gammaproteobacteria</taxon>
        <taxon>Alteromonadales</taxon>
        <taxon>Shewanellaceae</taxon>
        <taxon>Shewanella</taxon>
    </lineage>
</organism>
<keyword id="KW-0285">Flavoprotein</keyword>
<keyword id="KW-0288">FMN</keyword>
<keyword id="KW-0560">Oxidoreductase</keyword>
<keyword id="KW-0664">Pyridoxine biosynthesis</keyword>
<keyword id="KW-1185">Reference proteome</keyword>
<comment type="function">
    <text evidence="1">Catalyzes the oxidation of either pyridoxine 5'-phosphate (PNP) or pyridoxamine 5'-phosphate (PMP) into pyridoxal 5'-phosphate (PLP).</text>
</comment>
<comment type="catalytic activity">
    <reaction evidence="1">
        <text>pyridoxamine 5'-phosphate + O2 + H2O = pyridoxal 5'-phosphate + H2O2 + NH4(+)</text>
        <dbReference type="Rhea" id="RHEA:15817"/>
        <dbReference type="ChEBI" id="CHEBI:15377"/>
        <dbReference type="ChEBI" id="CHEBI:15379"/>
        <dbReference type="ChEBI" id="CHEBI:16240"/>
        <dbReference type="ChEBI" id="CHEBI:28938"/>
        <dbReference type="ChEBI" id="CHEBI:58451"/>
        <dbReference type="ChEBI" id="CHEBI:597326"/>
        <dbReference type="EC" id="1.4.3.5"/>
    </reaction>
</comment>
<comment type="catalytic activity">
    <reaction evidence="1">
        <text>pyridoxine 5'-phosphate + O2 = pyridoxal 5'-phosphate + H2O2</text>
        <dbReference type="Rhea" id="RHEA:15149"/>
        <dbReference type="ChEBI" id="CHEBI:15379"/>
        <dbReference type="ChEBI" id="CHEBI:16240"/>
        <dbReference type="ChEBI" id="CHEBI:58589"/>
        <dbReference type="ChEBI" id="CHEBI:597326"/>
        <dbReference type="EC" id="1.4.3.5"/>
    </reaction>
</comment>
<comment type="cofactor">
    <cofactor evidence="1">
        <name>FMN</name>
        <dbReference type="ChEBI" id="CHEBI:58210"/>
    </cofactor>
    <text evidence="1">Binds 1 FMN per subunit.</text>
</comment>
<comment type="pathway">
    <text evidence="1">Cofactor metabolism; pyridoxal 5'-phosphate salvage; pyridoxal 5'-phosphate from pyridoxamine 5'-phosphate: step 1/1.</text>
</comment>
<comment type="pathway">
    <text evidence="1">Cofactor metabolism; pyridoxal 5'-phosphate salvage; pyridoxal 5'-phosphate from pyridoxine 5'-phosphate: step 1/1.</text>
</comment>
<comment type="subunit">
    <text evidence="1">Homodimer.</text>
</comment>
<comment type="similarity">
    <text evidence="1">Belongs to the pyridoxamine 5'-phosphate oxidase family.</text>
</comment>
<reference key="1">
    <citation type="journal article" date="2002" name="Nat. Biotechnol.">
        <title>Genome sequence of the dissimilatory metal ion-reducing bacterium Shewanella oneidensis.</title>
        <authorList>
            <person name="Heidelberg J.F."/>
            <person name="Paulsen I.T."/>
            <person name="Nelson K.E."/>
            <person name="Gaidos E.J."/>
            <person name="Nelson W.C."/>
            <person name="Read T.D."/>
            <person name="Eisen J.A."/>
            <person name="Seshadri R."/>
            <person name="Ward N.L."/>
            <person name="Methe B.A."/>
            <person name="Clayton R.A."/>
            <person name="Meyer T."/>
            <person name="Tsapin A."/>
            <person name="Scott J."/>
            <person name="Beanan M.J."/>
            <person name="Brinkac L.M."/>
            <person name="Daugherty S.C."/>
            <person name="DeBoy R.T."/>
            <person name="Dodson R.J."/>
            <person name="Durkin A.S."/>
            <person name="Haft D.H."/>
            <person name="Kolonay J.F."/>
            <person name="Madupu R."/>
            <person name="Peterson J.D."/>
            <person name="Umayam L.A."/>
            <person name="White O."/>
            <person name="Wolf A.M."/>
            <person name="Vamathevan J.J."/>
            <person name="Weidman J.F."/>
            <person name="Impraim M."/>
            <person name="Lee K."/>
            <person name="Berry K.J."/>
            <person name="Lee C."/>
            <person name="Mueller J."/>
            <person name="Khouri H.M."/>
            <person name="Gill J."/>
            <person name="Utterback T.R."/>
            <person name="McDonald L.A."/>
            <person name="Feldblyum T.V."/>
            <person name="Smith H.O."/>
            <person name="Venter J.C."/>
            <person name="Nealson K.H."/>
            <person name="Fraser C.M."/>
        </authorList>
    </citation>
    <scope>NUCLEOTIDE SEQUENCE [LARGE SCALE GENOMIC DNA]</scope>
    <source>
        <strain>ATCC 700550 / JCM 31522 / CIP 106686 / LMG 19005 / NCIMB 14063 / MR-1</strain>
    </source>
</reference>
<protein>
    <recommendedName>
        <fullName evidence="1">Pyridoxine/pyridoxamine 5'-phosphate oxidase</fullName>
        <ecNumber evidence="1">1.4.3.5</ecNumber>
    </recommendedName>
    <alternativeName>
        <fullName evidence="1">PNP/PMP oxidase</fullName>
        <shortName evidence="1">PNPOx</shortName>
    </alternativeName>
    <alternativeName>
        <fullName evidence="1">Pyridoxal 5'-phosphate synthase</fullName>
    </alternativeName>
</protein>
<sequence length="212" mass="24345">MTDLSDIRREYTQGGLRRADLPKNPMQLFELWMTQARDAQLSDPTAMCVATVDEHGQPFQRIVLLKRFDDSGFVFFTNLGSRKALQIAANNKVSLHFPWHPIERQVSILGEAQPLSTAEVLKYFMTRPKESQIAAWVSQQSSKLSARQVLEGKFFEMKAKFAKGDVPLPSFWGGYLVKPSSIEFWQGGEHRLHDRFLYTREAQAWQIDRLAP</sequence>
<gene>
    <name evidence="1" type="primary">pdxH</name>
    <name type="ordered locus">SO_2895</name>
</gene>
<accession>Q8ED71</accession>
<proteinExistence type="inferred from homology"/>
<dbReference type="EC" id="1.4.3.5" evidence="1"/>
<dbReference type="EMBL" id="AE014299">
    <property type="protein sequence ID" value="AAN55911.1"/>
    <property type="molecule type" value="Genomic_DNA"/>
</dbReference>
<dbReference type="RefSeq" id="NP_718467.1">
    <property type="nucleotide sequence ID" value="NC_004347.2"/>
</dbReference>
<dbReference type="RefSeq" id="WP_011072804.1">
    <property type="nucleotide sequence ID" value="NC_004347.2"/>
</dbReference>
<dbReference type="SMR" id="Q8ED71"/>
<dbReference type="STRING" id="211586.SO_2895"/>
<dbReference type="PaxDb" id="211586-SO_2895"/>
<dbReference type="KEGG" id="son:SO_2895"/>
<dbReference type="PATRIC" id="fig|1028802.3.peg.1062"/>
<dbReference type="eggNOG" id="COG0259">
    <property type="taxonomic scope" value="Bacteria"/>
</dbReference>
<dbReference type="HOGENOM" id="CLU_032263_2_2_6"/>
<dbReference type="OrthoDB" id="9780392at2"/>
<dbReference type="PhylomeDB" id="Q8ED71"/>
<dbReference type="BioCyc" id="SONE211586:G1GMP-2671-MONOMER"/>
<dbReference type="UniPathway" id="UPA01068">
    <property type="reaction ID" value="UER00304"/>
</dbReference>
<dbReference type="UniPathway" id="UPA01068">
    <property type="reaction ID" value="UER00305"/>
</dbReference>
<dbReference type="Proteomes" id="UP000008186">
    <property type="component" value="Chromosome"/>
</dbReference>
<dbReference type="GO" id="GO:0010181">
    <property type="term" value="F:FMN binding"/>
    <property type="evidence" value="ECO:0007669"/>
    <property type="project" value="UniProtKB-UniRule"/>
</dbReference>
<dbReference type="GO" id="GO:0004733">
    <property type="term" value="F:pyridoxamine phosphate oxidase activity"/>
    <property type="evidence" value="ECO:0000318"/>
    <property type="project" value="GO_Central"/>
</dbReference>
<dbReference type="GO" id="GO:0042823">
    <property type="term" value="P:pyridoxal phosphate biosynthetic process"/>
    <property type="evidence" value="ECO:0000318"/>
    <property type="project" value="GO_Central"/>
</dbReference>
<dbReference type="GO" id="GO:0008615">
    <property type="term" value="P:pyridoxine biosynthetic process"/>
    <property type="evidence" value="ECO:0007669"/>
    <property type="project" value="UniProtKB-KW"/>
</dbReference>
<dbReference type="Gene3D" id="2.30.110.10">
    <property type="entry name" value="Electron Transport, Fmn-binding Protein, Chain A"/>
    <property type="match status" value="1"/>
</dbReference>
<dbReference type="HAMAP" id="MF_01629">
    <property type="entry name" value="PdxH"/>
    <property type="match status" value="1"/>
</dbReference>
<dbReference type="InterPro" id="IPR000659">
    <property type="entry name" value="Pyridox_Oxase"/>
</dbReference>
<dbReference type="InterPro" id="IPR019740">
    <property type="entry name" value="Pyridox_Oxase_CS"/>
</dbReference>
<dbReference type="InterPro" id="IPR011576">
    <property type="entry name" value="Pyridox_Oxase_N"/>
</dbReference>
<dbReference type="InterPro" id="IPR019576">
    <property type="entry name" value="Pyridoxamine_oxidase_dimer_C"/>
</dbReference>
<dbReference type="InterPro" id="IPR012349">
    <property type="entry name" value="Split_barrel_FMN-bd"/>
</dbReference>
<dbReference type="NCBIfam" id="TIGR00558">
    <property type="entry name" value="pdxH"/>
    <property type="match status" value="1"/>
</dbReference>
<dbReference type="NCBIfam" id="NF004231">
    <property type="entry name" value="PRK05679.1"/>
    <property type="match status" value="1"/>
</dbReference>
<dbReference type="PANTHER" id="PTHR10851:SF0">
    <property type="entry name" value="PYRIDOXINE-5'-PHOSPHATE OXIDASE"/>
    <property type="match status" value="1"/>
</dbReference>
<dbReference type="PANTHER" id="PTHR10851">
    <property type="entry name" value="PYRIDOXINE-5-PHOSPHATE OXIDASE"/>
    <property type="match status" value="1"/>
</dbReference>
<dbReference type="Pfam" id="PF10590">
    <property type="entry name" value="PNP_phzG_C"/>
    <property type="match status" value="1"/>
</dbReference>
<dbReference type="Pfam" id="PF01243">
    <property type="entry name" value="PNPOx_N"/>
    <property type="match status" value="1"/>
</dbReference>
<dbReference type="PIRSF" id="PIRSF000190">
    <property type="entry name" value="Pyd_amn-ph_oxd"/>
    <property type="match status" value="1"/>
</dbReference>
<dbReference type="SUPFAM" id="SSF50475">
    <property type="entry name" value="FMN-binding split barrel"/>
    <property type="match status" value="1"/>
</dbReference>
<dbReference type="PROSITE" id="PS01064">
    <property type="entry name" value="PYRIDOX_OXIDASE"/>
    <property type="match status" value="1"/>
</dbReference>
<evidence type="ECO:0000255" key="1">
    <source>
        <dbReference type="HAMAP-Rule" id="MF_01629"/>
    </source>
</evidence>